<feature type="chain" id="PRO_0000373761" description="Uncharacterized protein DP238L">
    <location>
        <begin position="1"/>
        <end position="238"/>
    </location>
</feature>
<feature type="region of interest" description="Disordered" evidence="1">
    <location>
        <begin position="1"/>
        <end position="26"/>
    </location>
</feature>
<feature type="region of interest" description="Disordered" evidence="1">
    <location>
        <begin position="195"/>
        <end position="238"/>
    </location>
</feature>
<feature type="compositionally biased region" description="Basic residues" evidence="1">
    <location>
        <begin position="1"/>
        <end position="10"/>
    </location>
</feature>
<evidence type="ECO:0000256" key="1">
    <source>
        <dbReference type="SAM" id="MobiDB-lite"/>
    </source>
</evidence>
<evidence type="ECO:0000269" key="2">
    <source>
    </source>
</evidence>
<evidence type="ECO:0000305" key="3"/>
<comment type="induction">
    <text evidence="2">Expressed in the early phase of the viral replicative cycle.</text>
</comment>
<comment type="similarity">
    <text evidence="3">Belongs to the asfivirus DP238L family.</text>
</comment>
<keyword id="KW-0244">Early protein</keyword>
<keyword id="KW-1185">Reference proteome</keyword>
<gene>
    <name type="ordered locus">BA71V-147</name>
    <name type="ORF">DP238L</name>
</gene>
<reference key="1">
    <citation type="journal article" date="1995" name="Virology">
        <title>Analysis of the complete nucleotide sequence of African swine fever virus.</title>
        <authorList>
            <person name="Yanez R.J."/>
            <person name="Rodriguez J.M."/>
            <person name="Nogal M.L."/>
            <person name="Yuste L."/>
            <person name="Enriquez C."/>
            <person name="Rodriguez J.F."/>
            <person name="Vinuela E."/>
        </authorList>
    </citation>
    <scope>NUCLEOTIDE SEQUENCE [LARGE SCALE GENOMIC DNA]</scope>
</reference>
<reference key="2">
    <citation type="journal article" date="2020" name="J. Virol.">
        <title>The African Swine Fever Virus Transcriptome.</title>
        <authorList>
            <person name="Cackett G."/>
            <person name="Matelska D."/>
            <person name="Sykora M."/>
            <person name="Portugal R."/>
            <person name="Malecki M."/>
            <person name="Baehler J."/>
            <person name="Dixon L."/>
            <person name="Werner F."/>
        </authorList>
    </citation>
    <scope>INDUCTION</scope>
</reference>
<accession>Q65206</accession>
<sequence length="238" mass="27066">MARGQNIRKRTFSDMDTPSDKNIGIHTNSLPKNNLYRRILFKGKISNYSISKDSLAKDHSSKHSISKNGLIGKKRPAPLDISFQSMNSSISSSTQKKTRILDEEIKDQSLSNENDTDSPVIVDITLKPSYMSKTSRITEIIHKMKELNMNRIEDGSSFNKKRSEHDDKNILLHTMEMEEEDCEIEEDIAIDSPYLNTSLSEDDTDSIVGTDYSEKEKETISETESSSDDESYSLYDSF</sequence>
<name>VFD38_ASFB7</name>
<protein>
    <recommendedName>
        <fullName>Uncharacterized protein DP238L</fullName>
    </recommendedName>
</protein>
<organismHost>
    <name type="scientific">Ornithodoros</name>
    <name type="common">relapsing fever ticks</name>
    <dbReference type="NCBI Taxonomy" id="6937"/>
</organismHost>
<organismHost>
    <name type="scientific">Sus scrofa</name>
    <name type="common">Pig</name>
    <dbReference type="NCBI Taxonomy" id="9823"/>
</organismHost>
<organism>
    <name type="scientific">African swine fever virus (strain Badajoz 1971 Vero-adapted)</name>
    <name type="common">Ba71V</name>
    <name type="synonym">ASFV</name>
    <dbReference type="NCBI Taxonomy" id="10498"/>
    <lineage>
        <taxon>Viruses</taxon>
        <taxon>Varidnaviria</taxon>
        <taxon>Bamfordvirae</taxon>
        <taxon>Nucleocytoviricota</taxon>
        <taxon>Pokkesviricetes</taxon>
        <taxon>Asfuvirales</taxon>
        <taxon>Asfarviridae</taxon>
        <taxon>Asfivirus</taxon>
        <taxon>African swine fever virus</taxon>
    </lineage>
</organism>
<proteinExistence type="evidence at transcript level"/>
<dbReference type="EMBL" id="U18466">
    <property type="protein sequence ID" value="AAA65373.1"/>
    <property type="molecule type" value="Genomic_DNA"/>
</dbReference>
<dbReference type="RefSeq" id="NP_042837.1">
    <property type="nucleotide sequence ID" value="NC_001659.2"/>
</dbReference>
<dbReference type="GeneID" id="22220373"/>
<dbReference type="KEGG" id="vg:22220373"/>
<dbReference type="Proteomes" id="UP000000624">
    <property type="component" value="Segment"/>
</dbReference>